<feature type="chain" id="PRO_1000064685" description="Ribosome maturation factor RimP">
    <location>
        <begin position="1"/>
        <end position="145"/>
    </location>
</feature>
<protein>
    <recommendedName>
        <fullName evidence="1">Ribosome maturation factor RimP</fullName>
    </recommendedName>
</protein>
<keyword id="KW-0963">Cytoplasm</keyword>
<keyword id="KW-0690">Ribosome biogenesis</keyword>
<evidence type="ECO:0000255" key="1">
    <source>
        <dbReference type="HAMAP-Rule" id="MF_01077"/>
    </source>
</evidence>
<accession>Q0SM52</accession>
<accession>G0IRY1</accession>
<gene>
    <name evidence="1" type="primary">rimP</name>
    <name type="ordered locus">BAPKO_0852</name>
    <name type="ordered locus">BafPKo_0827</name>
</gene>
<dbReference type="EMBL" id="CP000395">
    <property type="protein sequence ID" value="ABH02076.1"/>
    <property type="molecule type" value="Genomic_DNA"/>
</dbReference>
<dbReference type="EMBL" id="CP002933">
    <property type="protein sequence ID" value="AEL70016.1"/>
    <property type="molecule type" value="Genomic_DNA"/>
</dbReference>
<dbReference type="RefSeq" id="WP_011601237.1">
    <property type="nucleotide sequence ID" value="NZ_CP160066.1"/>
</dbReference>
<dbReference type="SMR" id="Q0SM52"/>
<dbReference type="STRING" id="29518.BLA32_00225"/>
<dbReference type="KEGG" id="baf:BAPKO_0852"/>
<dbReference type="KEGG" id="bafz:BafPKo_0827"/>
<dbReference type="PATRIC" id="fig|390236.22.peg.788"/>
<dbReference type="eggNOG" id="COG0779">
    <property type="taxonomic scope" value="Bacteria"/>
</dbReference>
<dbReference type="HOGENOM" id="CLU_070525_4_1_12"/>
<dbReference type="OrthoDB" id="361904at2"/>
<dbReference type="Proteomes" id="UP000005216">
    <property type="component" value="Chromosome"/>
</dbReference>
<dbReference type="GO" id="GO:0005829">
    <property type="term" value="C:cytosol"/>
    <property type="evidence" value="ECO:0007669"/>
    <property type="project" value="TreeGrafter"/>
</dbReference>
<dbReference type="GO" id="GO:0000028">
    <property type="term" value="P:ribosomal small subunit assembly"/>
    <property type="evidence" value="ECO:0007669"/>
    <property type="project" value="TreeGrafter"/>
</dbReference>
<dbReference type="GO" id="GO:0006412">
    <property type="term" value="P:translation"/>
    <property type="evidence" value="ECO:0007669"/>
    <property type="project" value="TreeGrafter"/>
</dbReference>
<dbReference type="HAMAP" id="MF_01077">
    <property type="entry name" value="RimP"/>
    <property type="match status" value="1"/>
</dbReference>
<dbReference type="InterPro" id="IPR003728">
    <property type="entry name" value="Ribosome_maturation_RimP"/>
</dbReference>
<dbReference type="InterPro" id="IPR028989">
    <property type="entry name" value="RimP_N"/>
</dbReference>
<dbReference type="InterPro" id="IPR035956">
    <property type="entry name" value="RimP_N_sf"/>
</dbReference>
<dbReference type="NCBIfam" id="NF011223">
    <property type="entry name" value="PRK14630.1"/>
    <property type="match status" value="1"/>
</dbReference>
<dbReference type="PANTHER" id="PTHR33867">
    <property type="entry name" value="RIBOSOME MATURATION FACTOR RIMP"/>
    <property type="match status" value="1"/>
</dbReference>
<dbReference type="PANTHER" id="PTHR33867:SF1">
    <property type="entry name" value="RIBOSOME MATURATION FACTOR RIMP"/>
    <property type="match status" value="1"/>
</dbReference>
<dbReference type="Pfam" id="PF02576">
    <property type="entry name" value="RimP_N"/>
    <property type="match status" value="1"/>
</dbReference>
<dbReference type="SUPFAM" id="SSF75420">
    <property type="entry name" value="YhbC-like, N-terminal domain"/>
    <property type="match status" value="1"/>
</dbReference>
<reference key="1">
    <citation type="journal article" date="2006" name="BMC Genomics">
        <title>Comparative genome analysis: selection pressure on the Borrelia vls cassettes is essential for infectivity.</title>
        <authorList>
            <person name="Gloeckner G."/>
            <person name="Schulte-Spechtel U."/>
            <person name="Schilhabel M."/>
            <person name="Felder M."/>
            <person name="Suehnel J."/>
            <person name="Wilske B."/>
            <person name="Platzer M."/>
        </authorList>
    </citation>
    <scope>NUCLEOTIDE SEQUENCE [LARGE SCALE GENOMIC DNA]</scope>
    <source>
        <strain>PKo</strain>
    </source>
</reference>
<reference key="2">
    <citation type="journal article" date="2011" name="J. Bacteriol.">
        <title>Whole-genome sequences of two Borrelia afzelii and two Borrelia garinii Lyme disease agent isolates.</title>
        <authorList>
            <person name="Casjens S.R."/>
            <person name="Mongodin E.F."/>
            <person name="Qiu W.G."/>
            <person name="Dunn J.J."/>
            <person name="Luft B.J."/>
            <person name="Fraser-Liggett C.M."/>
            <person name="Schutzer S.E."/>
        </authorList>
    </citation>
    <scope>NUCLEOTIDE SEQUENCE [LARGE SCALE GENOMIC DNA]</scope>
    <source>
        <strain>PKo</strain>
    </source>
</reference>
<proteinExistence type="inferred from homology"/>
<name>RIMP_BORAP</name>
<sequence length="145" mass="17005">MIKCFDKNNEVYNLIKNLTERLNVEILEINIFRNKNGGKIQIVLYSKNFSLGIDLMTDLHKMILLILEANLKYSFILELSTPGIDRRIKSDKEFQIFEGKKIKLMLDNEFEEGFILEAKSKSFIFKTDSKELNVFYSDVKKARLV</sequence>
<organism>
    <name type="scientific">Borreliella afzelii (strain PKo)</name>
    <name type="common">Borrelia afzelii</name>
    <dbReference type="NCBI Taxonomy" id="390236"/>
    <lineage>
        <taxon>Bacteria</taxon>
        <taxon>Pseudomonadati</taxon>
        <taxon>Spirochaetota</taxon>
        <taxon>Spirochaetia</taxon>
        <taxon>Spirochaetales</taxon>
        <taxon>Borreliaceae</taxon>
        <taxon>Borreliella</taxon>
    </lineage>
</organism>
<comment type="function">
    <text evidence="1">Required for maturation of 30S ribosomal subunits.</text>
</comment>
<comment type="subcellular location">
    <subcellularLocation>
        <location evidence="1">Cytoplasm</location>
    </subcellularLocation>
</comment>
<comment type="similarity">
    <text evidence="1">Belongs to the RimP family.</text>
</comment>